<feature type="chain" id="PRO_0000053828" description="Uncharacterized acyl-CoA thioester hydrolase TC_0822">
    <location>
        <begin position="1"/>
        <end position="159"/>
    </location>
</feature>
<feature type="domain" description="HotDog ACOT-type" evidence="1">
    <location>
        <begin position="14"/>
        <end position="126"/>
    </location>
</feature>
<reference key="1">
    <citation type="journal article" date="2000" name="Nucleic Acids Res.">
        <title>Genome sequences of Chlamydia trachomatis MoPn and Chlamydia pneumoniae AR39.</title>
        <authorList>
            <person name="Read T.D."/>
            <person name="Brunham R.C."/>
            <person name="Shen C."/>
            <person name="Gill S.R."/>
            <person name="Heidelberg J.F."/>
            <person name="White O."/>
            <person name="Hickey E.K."/>
            <person name="Peterson J.D."/>
            <person name="Utterback T.R."/>
            <person name="Berry K.J."/>
            <person name="Bass S."/>
            <person name="Linher K.D."/>
            <person name="Weidman J.F."/>
            <person name="Khouri H.M."/>
            <person name="Craven B."/>
            <person name="Bowman C."/>
            <person name="Dodson R.J."/>
            <person name="Gwinn M.L."/>
            <person name="Nelson W.C."/>
            <person name="DeBoy R.T."/>
            <person name="Kolonay J.F."/>
            <person name="McClarty G."/>
            <person name="Salzberg S.L."/>
            <person name="Eisen J.A."/>
            <person name="Fraser C.M."/>
        </authorList>
    </citation>
    <scope>NUCLEOTIDE SEQUENCE [LARGE SCALE GENOMIC DNA]</scope>
    <source>
        <strain>MoPn / Nigg</strain>
    </source>
</reference>
<protein>
    <recommendedName>
        <fullName>Uncharacterized acyl-CoA thioester hydrolase TC_0822</fullName>
        <ecNumber>3.1.2.-</ecNumber>
    </recommendedName>
</protein>
<dbReference type="EC" id="3.1.2.-"/>
<dbReference type="EMBL" id="AE002160">
    <property type="protein sequence ID" value="AAF39624.1"/>
    <property type="molecule type" value="Genomic_DNA"/>
</dbReference>
<dbReference type="PIR" id="C81662">
    <property type="entry name" value="C81662"/>
</dbReference>
<dbReference type="RefSeq" id="WP_010231683.1">
    <property type="nucleotide sequence ID" value="NZ_CP063055.1"/>
</dbReference>
<dbReference type="SMR" id="Q9PJK7"/>
<dbReference type="GeneID" id="1246189"/>
<dbReference type="KEGG" id="cmu:TC_0822"/>
<dbReference type="eggNOG" id="COG1607">
    <property type="taxonomic scope" value="Bacteria"/>
</dbReference>
<dbReference type="HOGENOM" id="CLU_050164_3_2_0"/>
<dbReference type="OrthoDB" id="9791628at2"/>
<dbReference type="Proteomes" id="UP000000800">
    <property type="component" value="Chromosome"/>
</dbReference>
<dbReference type="GO" id="GO:0005829">
    <property type="term" value="C:cytosol"/>
    <property type="evidence" value="ECO:0007669"/>
    <property type="project" value="TreeGrafter"/>
</dbReference>
<dbReference type="GO" id="GO:0052816">
    <property type="term" value="F:long-chain fatty acyl-CoA hydrolase activity"/>
    <property type="evidence" value="ECO:0007669"/>
    <property type="project" value="TreeGrafter"/>
</dbReference>
<dbReference type="GO" id="GO:0006637">
    <property type="term" value="P:acyl-CoA metabolic process"/>
    <property type="evidence" value="ECO:0007669"/>
    <property type="project" value="TreeGrafter"/>
</dbReference>
<dbReference type="CDD" id="cd03442">
    <property type="entry name" value="BFIT_BACH"/>
    <property type="match status" value="1"/>
</dbReference>
<dbReference type="FunFam" id="3.10.129.10:FF:000128">
    <property type="entry name" value="Acyl-CoA thioester hydrolase"/>
    <property type="match status" value="1"/>
</dbReference>
<dbReference type="Gene3D" id="3.10.129.10">
    <property type="entry name" value="Hotdog Thioesterase"/>
    <property type="match status" value="1"/>
</dbReference>
<dbReference type="InterPro" id="IPR040170">
    <property type="entry name" value="Cytosol_ACT"/>
</dbReference>
<dbReference type="InterPro" id="IPR033120">
    <property type="entry name" value="HOTDOG_ACOT"/>
</dbReference>
<dbReference type="InterPro" id="IPR029069">
    <property type="entry name" value="HotDog_dom_sf"/>
</dbReference>
<dbReference type="InterPro" id="IPR006683">
    <property type="entry name" value="Thioestr_dom"/>
</dbReference>
<dbReference type="PANTHER" id="PTHR11049">
    <property type="entry name" value="ACYL COENZYME A THIOESTER HYDROLASE"/>
    <property type="match status" value="1"/>
</dbReference>
<dbReference type="PANTHER" id="PTHR11049:SF16">
    <property type="entry name" value="PROTEIN VDLD"/>
    <property type="match status" value="1"/>
</dbReference>
<dbReference type="Pfam" id="PF03061">
    <property type="entry name" value="4HBT"/>
    <property type="match status" value="1"/>
</dbReference>
<dbReference type="SUPFAM" id="SSF54637">
    <property type="entry name" value="Thioesterase/thiol ester dehydrase-isomerase"/>
    <property type="match status" value="1"/>
</dbReference>
<dbReference type="PROSITE" id="PS51770">
    <property type="entry name" value="HOTDOG_ACOT"/>
    <property type="match status" value="1"/>
</dbReference>
<keyword id="KW-0378">Hydrolase</keyword>
<organism>
    <name type="scientific">Chlamydia muridarum (strain MoPn / Nigg)</name>
    <dbReference type="NCBI Taxonomy" id="243161"/>
    <lineage>
        <taxon>Bacteria</taxon>
        <taxon>Pseudomonadati</taxon>
        <taxon>Chlamydiota</taxon>
        <taxon>Chlamydiia</taxon>
        <taxon>Chlamydiales</taxon>
        <taxon>Chlamydiaceae</taxon>
        <taxon>Chlamydia/Chlamydophila group</taxon>
        <taxon>Chlamydia</taxon>
    </lineage>
</organism>
<comment type="similarity">
    <text evidence="2">Belongs to the acyl coenzyme A hydrolase family.</text>
</comment>
<proteinExistence type="inferred from homology"/>
<name>Y822_CHLMU</name>
<accession>Q9PJK7</accession>
<evidence type="ECO:0000255" key="1">
    <source>
        <dbReference type="PROSITE-ProRule" id="PRU01106"/>
    </source>
</evidence>
<evidence type="ECO:0000305" key="2"/>
<sequence>MRKNIKDKKKTVSASCINDHIYKIFPNDLNTNNTIFGGLLMSLLDRLALVVAERHCESICVTALVDAVRFYAPAYMGENLICCASVNRSWRTSLEVGVKVWAENIYKQEQRHITSAYFTFVAVDENNSPVEIPELVPETQEEIRRFHEADQRRASRLKL</sequence>
<gene>
    <name type="ordered locus">TC_0822</name>
</gene>